<proteinExistence type="inferred from homology"/>
<keyword id="KW-0021">Allosteric enzyme</keyword>
<keyword id="KW-0963">Cytoplasm</keyword>
<keyword id="KW-0378">Hydrolase</keyword>
<keyword id="KW-0479">Metal-binding</keyword>
<keyword id="KW-0645">Protease</keyword>
<keyword id="KW-1185">Reference proteome</keyword>
<keyword id="KW-0915">Sodium</keyword>
<keyword id="KW-0888">Threonine protease</keyword>
<feature type="chain" id="PRO_0000336806" description="ATP-dependent protease subunit HslV">
    <location>
        <begin position="1"/>
        <end position="184"/>
    </location>
</feature>
<feature type="active site" evidence="1">
    <location>
        <position position="11"/>
    </location>
</feature>
<feature type="binding site" evidence="1">
    <location>
        <position position="165"/>
    </location>
    <ligand>
        <name>Na(+)</name>
        <dbReference type="ChEBI" id="CHEBI:29101"/>
    </ligand>
</feature>
<feature type="binding site" evidence="1">
    <location>
        <position position="168"/>
    </location>
    <ligand>
        <name>Na(+)</name>
        <dbReference type="ChEBI" id="CHEBI:29101"/>
    </ligand>
</feature>
<feature type="binding site" evidence="1">
    <location>
        <position position="171"/>
    </location>
    <ligand>
        <name>Na(+)</name>
        <dbReference type="ChEBI" id="CHEBI:29101"/>
    </ligand>
</feature>
<accession>Q5NQY4</accession>
<dbReference type="EC" id="3.4.25.2" evidence="1"/>
<dbReference type="EMBL" id="AE008692">
    <property type="protein sequence ID" value="AAV88870.1"/>
    <property type="molecule type" value="Genomic_DNA"/>
</dbReference>
<dbReference type="RefSeq" id="WP_011240190.1">
    <property type="nucleotide sequence ID" value="NZ_CP035711.1"/>
</dbReference>
<dbReference type="SMR" id="Q5NQY4"/>
<dbReference type="STRING" id="264203.ZMO0246"/>
<dbReference type="MEROPS" id="T01.006"/>
<dbReference type="GeneID" id="79904525"/>
<dbReference type="KEGG" id="zmo:ZMO0246"/>
<dbReference type="eggNOG" id="COG5405">
    <property type="taxonomic scope" value="Bacteria"/>
</dbReference>
<dbReference type="HOGENOM" id="CLU_093872_1_0_5"/>
<dbReference type="Proteomes" id="UP000001173">
    <property type="component" value="Chromosome"/>
</dbReference>
<dbReference type="GO" id="GO:0009376">
    <property type="term" value="C:HslUV protease complex"/>
    <property type="evidence" value="ECO:0007669"/>
    <property type="project" value="UniProtKB-UniRule"/>
</dbReference>
<dbReference type="GO" id="GO:0005839">
    <property type="term" value="C:proteasome core complex"/>
    <property type="evidence" value="ECO:0007669"/>
    <property type="project" value="InterPro"/>
</dbReference>
<dbReference type="GO" id="GO:0046872">
    <property type="term" value="F:metal ion binding"/>
    <property type="evidence" value="ECO:0007669"/>
    <property type="project" value="UniProtKB-KW"/>
</dbReference>
<dbReference type="GO" id="GO:0004298">
    <property type="term" value="F:threonine-type endopeptidase activity"/>
    <property type="evidence" value="ECO:0007669"/>
    <property type="project" value="UniProtKB-KW"/>
</dbReference>
<dbReference type="GO" id="GO:0051603">
    <property type="term" value="P:proteolysis involved in protein catabolic process"/>
    <property type="evidence" value="ECO:0007669"/>
    <property type="project" value="InterPro"/>
</dbReference>
<dbReference type="CDD" id="cd01913">
    <property type="entry name" value="protease_HslV"/>
    <property type="match status" value="1"/>
</dbReference>
<dbReference type="Gene3D" id="3.60.20.10">
    <property type="entry name" value="Glutamine Phosphoribosylpyrophosphate, subunit 1, domain 1"/>
    <property type="match status" value="1"/>
</dbReference>
<dbReference type="HAMAP" id="MF_00248">
    <property type="entry name" value="HslV"/>
    <property type="match status" value="1"/>
</dbReference>
<dbReference type="InterPro" id="IPR022281">
    <property type="entry name" value="ATP-dep_Prtase_HsIV_su"/>
</dbReference>
<dbReference type="InterPro" id="IPR029055">
    <property type="entry name" value="Ntn_hydrolases_N"/>
</dbReference>
<dbReference type="InterPro" id="IPR001353">
    <property type="entry name" value="Proteasome_sua/b"/>
</dbReference>
<dbReference type="InterPro" id="IPR023333">
    <property type="entry name" value="Proteasome_suB-type"/>
</dbReference>
<dbReference type="NCBIfam" id="TIGR03692">
    <property type="entry name" value="ATP_dep_HslV"/>
    <property type="match status" value="1"/>
</dbReference>
<dbReference type="NCBIfam" id="NF003964">
    <property type="entry name" value="PRK05456.1"/>
    <property type="match status" value="1"/>
</dbReference>
<dbReference type="PANTHER" id="PTHR32194:SF7">
    <property type="entry name" value="ATP-DEPENDENT PROTEASE SUBUNIT HSLV"/>
    <property type="match status" value="1"/>
</dbReference>
<dbReference type="PANTHER" id="PTHR32194">
    <property type="entry name" value="METALLOPROTEASE TLDD"/>
    <property type="match status" value="1"/>
</dbReference>
<dbReference type="Pfam" id="PF00227">
    <property type="entry name" value="Proteasome"/>
    <property type="match status" value="1"/>
</dbReference>
<dbReference type="PIRSF" id="PIRSF039093">
    <property type="entry name" value="HslV"/>
    <property type="match status" value="1"/>
</dbReference>
<dbReference type="SUPFAM" id="SSF56235">
    <property type="entry name" value="N-terminal nucleophile aminohydrolases (Ntn hydrolases)"/>
    <property type="match status" value="1"/>
</dbReference>
<dbReference type="PROSITE" id="PS51476">
    <property type="entry name" value="PROTEASOME_BETA_2"/>
    <property type="match status" value="1"/>
</dbReference>
<comment type="function">
    <text evidence="1">Protease subunit of a proteasome-like degradation complex believed to be a general protein degrading machinery.</text>
</comment>
<comment type="catalytic activity">
    <reaction evidence="1">
        <text>ATP-dependent cleavage of peptide bonds with broad specificity.</text>
        <dbReference type="EC" id="3.4.25.2"/>
    </reaction>
</comment>
<comment type="activity regulation">
    <text evidence="1">Allosterically activated by HslU binding.</text>
</comment>
<comment type="subunit">
    <text evidence="1">A double ring-shaped homohexamer of HslV is capped on each side by a ring-shaped HslU homohexamer. The assembly of the HslU/HslV complex is dependent on binding of ATP.</text>
</comment>
<comment type="subcellular location">
    <subcellularLocation>
        <location evidence="1">Cytoplasm</location>
    </subcellularLocation>
</comment>
<comment type="similarity">
    <text evidence="1">Belongs to the peptidase T1B family. HslV subfamily.</text>
</comment>
<reference key="1">
    <citation type="journal article" date="2005" name="Nat. Biotechnol.">
        <title>The genome sequence of the ethanologenic bacterium Zymomonas mobilis ZM4.</title>
        <authorList>
            <person name="Seo J.-S."/>
            <person name="Chong H."/>
            <person name="Park H.S."/>
            <person name="Yoon K.-O."/>
            <person name="Jung C."/>
            <person name="Kim J.J."/>
            <person name="Hong J.H."/>
            <person name="Kim H."/>
            <person name="Kim J.-H."/>
            <person name="Kil J.-I."/>
            <person name="Park C.J."/>
            <person name="Oh H.-M."/>
            <person name="Lee J.-S."/>
            <person name="Jin S.-J."/>
            <person name="Um H.-W."/>
            <person name="Lee H.-J."/>
            <person name="Oh S.-J."/>
            <person name="Kim J.Y."/>
            <person name="Kang H.L."/>
            <person name="Lee S.Y."/>
            <person name="Lee K.J."/>
            <person name="Kang H.S."/>
        </authorList>
    </citation>
    <scope>NUCLEOTIDE SEQUENCE [LARGE SCALE GENOMIC DNA]</scope>
    <source>
        <strain>ATCC 31821 / ZM4 / CP4</strain>
    </source>
</reference>
<gene>
    <name evidence="1" type="primary">hslV</name>
    <name type="ordered locus">ZMO0246</name>
</gene>
<organism>
    <name type="scientific">Zymomonas mobilis subsp. mobilis (strain ATCC 31821 / ZM4 / CP4)</name>
    <dbReference type="NCBI Taxonomy" id="264203"/>
    <lineage>
        <taxon>Bacteria</taxon>
        <taxon>Pseudomonadati</taxon>
        <taxon>Pseudomonadota</taxon>
        <taxon>Alphaproteobacteria</taxon>
        <taxon>Sphingomonadales</taxon>
        <taxon>Zymomonadaceae</taxon>
        <taxon>Zymomonas</taxon>
    </lineage>
</organism>
<protein>
    <recommendedName>
        <fullName evidence="1">ATP-dependent protease subunit HslV</fullName>
        <ecNumber evidence="1">3.4.25.2</ecNumber>
    </recommendedName>
</protein>
<evidence type="ECO:0000255" key="1">
    <source>
        <dbReference type="HAMAP-Rule" id="MF_00248"/>
    </source>
</evidence>
<sequence length="184" mass="19667">MSEDKIGWHGTTILSVRRNGRVVIAGDGQVSMGNTVMKPNARKVRRLGDGSVIGGFAGATADAFTLFERLEAKLERHNGQLLRAAVELAKDWRTDKYLRNLEALMIVADDQVTLVLTGNGDVLEPVGGIAAIGSGGNFALSAARALVDYEEDAEVIARKALAVAADICVFTNDQVTIETLESRV</sequence>
<name>HSLV_ZYMMO</name>